<comment type="function">
    <text evidence="1">Member of a network of 50S ribosomal subunit biogenesis factors which assembles along the 30S-50S interface, preventing incorrect 23S rRNA structures from forming. Promotes peptidyl transferase center (PTC) maturation.</text>
</comment>
<comment type="subcellular location">
    <subcellularLocation>
        <location evidence="1">Cytoplasm</location>
    </subcellularLocation>
    <text evidence="1">Associates with late stage pre-50S ribosomal subunits.</text>
</comment>
<comment type="similarity">
    <text evidence="1">Belongs to the DarP family.</text>
</comment>
<feature type="chain" id="PRO_1000198402" description="Dual-action ribosomal maturation protein DarP">
    <location>
        <begin position="1"/>
        <end position="196"/>
    </location>
</feature>
<dbReference type="EMBL" id="CP001111">
    <property type="protein sequence ID" value="ACF52596.1"/>
    <property type="molecule type" value="Genomic_DNA"/>
</dbReference>
<dbReference type="SMR" id="B4SR01"/>
<dbReference type="STRING" id="391008.Smal_2897"/>
<dbReference type="KEGG" id="smt:Smal_2897"/>
<dbReference type="eggNOG" id="COG3028">
    <property type="taxonomic scope" value="Bacteria"/>
</dbReference>
<dbReference type="HOGENOM" id="CLU_106757_0_0_6"/>
<dbReference type="OrthoDB" id="5293604at2"/>
<dbReference type="Proteomes" id="UP000001867">
    <property type="component" value="Chromosome"/>
</dbReference>
<dbReference type="GO" id="GO:0005829">
    <property type="term" value="C:cytosol"/>
    <property type="evidence" value="ECO:0007669"/>
    <property type="project" value="TreeGrafter"/>
</dbReference>
<dbReference type="GO" id="GO:0043022">
    <property type="term" value="F:ribosome binding"/>
    <property type="evidence" value="ECO:0007669"/>
    <property type="project" value="UniProtKB-UniRule"/>
</dbReference>
<dbReference type="GO" id="GO:0019843">
    <property type="term" value="F:rRNA binding"/>
    <property type="evidence" value="ECO:0007669"/>
    <property type="project" value="UniProtKB-UniRule"/>
</dbReference>
<dbReference type="GO" id="GO:1902626">
    <property type="term" value="P:assembly of large subunit precursor of preribosome"/>
    <property type="evidence" value="ECO:0007669"/>
    <property type="project" value="UniProtKB-UniRule"/>
</dbReference>
<dbReference type="CDD" id="cd16331">
    <property type="entry name" value="YjgA-like"/>
    <property type="match status" value="1"/>
</dbReference>
<dbReference type="FunFam" id="1.10.60.30:FF:000002">
    <property type="entry name" value="UPF0307 protein YjgA"/>
    <property type="match status" value="1"/>
</dbReference>
<dbReference type="Gene3D" id="1.10.60.30">
    <property type="entry name" value="PSPTO4464-like domains"/>
    <property type="match status" value="2"/>
</dbReference>
<dbReference type="HAMAP" id="MF_00765">
    <property type="entry name" value="DarP"/>
    <property type="match status" value="1"/>
</dbReference>
<dbReference type="InterPro" id="IPR006839">
    <property type="entry name" value="DarP"/>
</dbReference>
<dbReference type="InterPro" id="IPR023153">
    <property type="entry name" value="DarP_sf"/>
</dbReference>
<dbReference type="NCBIfam" id="NF003593">
    <property type="entry name" value="PRK05255.1-1"/>
    <property type="match status" value="1"/>
</dbReference>
<dbReference type="PANTHER" id="PTHR38101">
    <property type="entry name" value="UPF0307 PROTEIN YJGA"/>
    <property type="match status" value="1"/>
</dbReference>
<dbReference type="PANTHER" id="PTHR38101:SF1">
    <property type="entry name" value="UPF0307 PROTEIN YJGA"/>
    <property type="match status" value="1"/>
</dbReference>
<dbReference type="Pfam" id="PF04751">
    <property type="entry name" value="DarP"/>
    <property type="match status" value="1"/>
</dbReference>
<dbReference type="PIRSF" id="PIRSF016183">
    <property type="entry name" value="UCP016183"/>
    <property type="match status" value="1"/>
</dbReference>
<dbReference type="SUPFAM" id="SSF158710">
    <property type="entry name" value="PSPTO4464-like"/>
    <property type="match status" value="1"/>
</dbReference>
<organism>
    <name type="scientific">Stenotrophomonas maltophilia (strain R551-3)</name>
    <dbReference type="NCBI Taxonomy" id="391008"/>
    <lineage>
        <taxon>Bacteria</taxon>
        <taxon>Pseudomonadati</taxon>
        <taxon>Pseudomonadota</taxon>
        <taxon>Gammaproteobacteria</taxon>
        <taxon>Lysobacterales</taxon>
        <taxon>Lysobacteraceae</taxon>
        <taxon>Stenotrophomonas</taxon>
        <taxon>Stenotrophomonas maltophilia group</taxon>
    </lineage>
</organism>
<name>DARP_STRM5</name>
<protein>
    <recommendedName>
        <fullName evidence="1">Dual-action ribosomal maturation protein DarP</fullName>
    </recommendedName>
    <alternativeName>
        <fullName evidence="1">Large ribosomal subunit assembly factor DarP</fullName>
    </alternativeName>
</protein>
<sequence>MRGRDEETGEFHDKSRSQNRRDALDVLALGEKLVSLTPAQLARLPVPEDLLPHIAECKRITAHIAHKRQLAFLAKHMRREEDATLDAIRDALDANSETGRREVAMMHRAEDWRERLLAEGDKALAALLDDYPQADRQQLRTLVRNAQAEKAKNKPPRAYREIFQVLRTLMLPAALGLKASDDEVEADDTADASDED</sequence>
<gene>
    <name evidence="1" type="primary">darP</name>
    <name type="ordered locus">Smal_2897</name>
</gene>
<keyword id="KW-0963">Cytoplasm</keyword>
<keyword id="KW-0690">Ribosome biogenesis</keyword>
<keyword id="KW-0694">RNA-binding</keyword>
<keyword id="KW-0699">rRNA-binding</keyword>
<evidence type="ECO:0000255" key="1">
    <source>
        <dbReference type="HAMAP-Rule" id="MF_00765"/>
    </source>
</evidence>
<proteinExistence type="inferred from homology"/>
<reference key="1">
    <citation type="submission" date="2008-06" db="EMBL/GenBank/DDBJ databases">
        <title>Complete sequence of Stenotrophomonas maltophilia R551-3.</title>
        <authorList>
            <consortium name="US DOE Joint Genome Institute"/>
            <person name="Lucas S."/>
            <person name="Copeland A."/>
            <person name="Lapidus A."/>
            <person name="Glavina del Rio T."/>
            <person name="Dalin E."/>
            <person name="Tice H."/>
            <person name="Pitluck S."/>
            <person name="Chain P."/>
            <person name="Malfatti S."/>
            <person name="Shin M."/>
            <person name="Vergez L."/>
            <person name="Lang D."/>
            <person name="Schmutz J."/>
            <person name="Larimer F."/>
            <person name="Land M."/>
            <person name="Hauser L."/>
            <person name="Kyrpides N."/>
            <person name="Mikhailova N."/>
            <person name="Taghavi S."/>
            <person name="Monchy S."/>
            <person name="Newman L."/>
            <person name="Vangronsveld J."/>
            <person name="van der Lelie D."/>
            <person name="Richardson P."/>
        </authorList>
    </citation>
    <scope>NUCLEOTIDE SEQUENCE [LARGE SCALE GENOMIC DNA]</scope>
    <source>
        <strain>R551-3</strain>
    </source>
</reference>
<accession>B4SR01</accession>